<evidence type="ECO:0000269" key="1">
    <source>
    </source>
</evidence>
<evidence type="ECO:0000305" key="2"/>
<evidence type="ECO:0007744" key="3">
    <source>
    </source>
</evidence>
<evidence type="ECO:0007829" key="4">
    <source>
        <dbReference type="PDB" id="2FJI"/>
    </source>
</evidence>
<accession>P32844</accession>
<accession>D6VVL6</accession>
<feature type="initiator methionine" description="Removed" evidence="3">
    <location>
        <position position="1"/>
    </location>
</feature>
<feature type="chain" id="PRO_0000118931" description="Exocyst complex component SEC6">
    <location>
        <begin position="2"/>
        <end position="805"/>
    </location>
</feature>
<feature type="modified residue" description="N-acetylserine" evidence="3">
    <location>
        <position position="2"/>
    </location>
</feature>
<feature type="sequence conflict" description="In Ref. 1." evidence="2" ref="1">
    <original>MSSDPLQQVCDLIKGDLSLERVRDIKEQLLKEKSVVEYQLNKESDKYYGEVEESLKLLNLSKNSVTSIKQQINEVNKLGNDNRFAINRYDI</original>
    <variation>MKLINWVMIIDLQLIVMIY</variation>
    <location>
        <begin position="1"/>
        <end position="91"/>
    </location>
</feature>
<feature type="sequence conflict" description="In Ref. 1; CAA46004." evidence="2" ref="1">
    <original>K</original>
    <variation>E</variation>
    <location>
        <position position="501"/>
    </location>
</feature>
<feature type="sequence conflict" description="In Ref. 1; CAA46004." evidence="2" ref="1">
    <original>QQ</original>
    <variation>HE</variation>
    <location>
        <begin position="627"/>
        <end position="628"/>
    </location>
</feature>
<feature type="helix" evidence="4">
    <location>
        <begin position="412"/>
        <end position="447"/>
    </location>
</feature>
<feature type="helix" evidence="4">
    <location>
        <begin position="463"/>
        <end position="481"/>
    </location>
</feature>
<feature type="helix" evidence="4">
    <location>
        <begin position="485"/>
        <end position="522"/>
    </location>
</feature>
<feature type="turn" evidence="4">
    <location>
        <begin position="523"/>
        <end position="526"/>
    </location>
</feature>
<feature type="helix" evidence="4">
    <location>
        <begin position="527"/>
        <end position="529"/>
    </location>
</feature>
<feature type="turn" evidence="4">
    <location>
        <begin position="533"/>
        <end position="535"/>
    </location>
</feature>
<feature type="helix" evidence="4">
    <location>
        <begin position="541"/>
        <end position="567"/>
    </location>
</feature>
<feature type="helix" evidence="4">
    <location>
        <begin position="572"/>
        <end position="583"/>
    </location>
</feature>
<feature type="helix" evidence="4">
    <location>
        <begin position="586"/>
        <end position="606"/>
    </location>
</feature>
<feature type="helix" evidence="4">
    <location>
        <begin position="609"/>
        <end position="612"/>
    </location>
</feature>
<feature type="turn" evidence="4">
    <location>
        <begin position="613"/>
        <end position="616"/>
    </location>
</feature>
<feature type="helix" evidence="4">
    <location>
        <begin position="618"/>
        <end position="620"/>
    </location>
</feature>
<feature type="helix" evidence="4">
    <location>
        <begin position="625"/>
        <end position="640"/>
    </location>
</feature>
<feature type="helix" evidence="4">
    <location>
        <begin position="641"/>
        <end position="643"/>
    </location>
</feature>
<feature type="helix" evidence="4">
    <location>
        <begin position="646"/>
        <end position="666"/>
    </location>
</feature>
<feature type="helix" evidence="4">
    <location>
        <begin position="667"/>
        <end position="670"/>
    </location>
</feature>
<feature type="helix" evidence="4">
    <location>
        <begin position="677"/>
        <end position="679"/>
    </location>
</feature>
<feature type="helix" evidence="4">
    <location>
        <begin position="680"/>
        <end position="699"/>
    </location>
</feature>
<feature type="turn" evidence="4">
    <location>
        <begin position="700"/>
        <end position="702"/>
    </location>
</feature>
<feature type="helix" evidence="4">
    <location>
        <begin position="706"/>
        <end position="725"/>
    </location>
</feature>
<feature type="helix" evidence="4">
    <location>
        <begin position="728"/>
        <end position="730"/>
    </location>
</feature>
<feature type="helix" evidence="4">
    <location>
        <begin position="731"/>
        <end position="739"/>
    </location>
</feature>
<feature type="helix" evidence="4">
    <location>
        <begin position="748"/>
        <end position="754"/>
    </location>
</feature>
<feature type="helix" evidence="4">
    <location>
        <begin position="762"/>
        <end position="785"/>
    </location>
</feature>
<feature type="helix" evidence="4">
    <location>
        <begin position="794"/>
        <end position="797"/>
    </location>
</feature>
<dbReference type="EMBL" id="X64738">
    <property type="protein sequence ID" value="CAA46004.1"/>
    <property type="molecule type" value="Genomic_DNA"/>
</dbReference>
<dbReference type="EMBL" id="Z38060">
    <property type="protein sequence ID" value="CAA86155.1"/>
    <property type="molecule type" value="Genomic_DNA"/>
</dbReference>
<dbReference type="EMBL" id="BK006942">
    <property type="protein sequence ID" value="DAA08482.1"/>
    <property type="molecule type" value="Genomic_DNA"/>
</dbReference>
<dbReference type="PIR" id="S48411">
    <property type="entry name" value="S48411"/>
</dbReference>
<dbReference type="RefSeq" id="NP_012196.1">
    <property type="nucleotide sequence ID" value="NM_001179418.1"/>
</dbReference>
<dbReference type="PDB" id="2FJI">
    <property type="method" value="X-ray"/>
    <property type="resolution" value="2.40 A"/>
    <property type="chains" value="1/2=411-805"/>
</dbReference>
<dbReference type="PDB" id="5YFP">
    <property type="method" value="EM"/>
    <property type="resolution" value="4.40 A"/>
    <property type="chains" value="C=1-805"/>
</dbReference>
<dbReference type="PDB" id="6VKL">
    <property type="method" value="EM"/>
    <property type="resolution" value="4.40 A"/>
    <property type="chains" value="C=1-805"/>
</dbReference>
<dbReference type="PDBsum" id="2FJI"/>
<dbReference type="PDBsum" id="5YFP"/>
<dbReference type="PDBsum" id="6VKL"/>
<dbReference type="EMDB" id="EMD-21226"/>
<dbReference type="EMDB" id="EMD-6827"/>
<dbReference type="SMR" id="P32844"/>
<dbReference type="BioGRID" id="34924">
    <property type="interactions" value="130"/>
</dbReference>
<dbReference type="ComplexPortal" id="CPX-1890">
    <property type="entry name" value="Exocyst"/>
</dbReference>
<dbReference type="DIP" id="DIP-5649N"/>
<dbReference type="FunCoup" id="P32844">
    <property type="interactions" value="309"/>
</dbReference>
<dbReference type="IntAct" id="P32844">
    <property type="interactions" value="21"/>
</dbReference>
<dbReference type="MINT" id="P32844"/>
<dbReference type="STRING" id="4932.YIL068C"/>
<dbReference type="TCDB" id="1.F.2.1.1">
    <property type="family name" value="the octameric exocyst (exocyst) family"/>
</dbReference>
<dbReference type="iPTMnet" id="P32844"/>
<dbReference type="PaxDb" id="4932-YIL068C"/>
<dbReference type="PeptideAtlas" id="P32844"/>
<dbReference type="EnsemblFungi" id="YIL068C_mRNA">
    <property type="protein sequence ID" value="YIL068C"/>
    <property type="gene ID" value="YIL068C"/>
</dbReference>
<dbReference type="GeneID" id="854742"/>
<dbReference type="KEGG" id="sce:YIL068C"/>
<dbReference type="AGR" id="SGD:S000001330"/>
<dbReference type="SGD" id="S000001330">
    <property type="gene designation" value="SEC6"/>
</dbReference>
<dbReference type="VEuPathDB" id="FungiDB:YIL068C"/>
<dbReference type="eggNOG" id="KOG2286">
    <property type="taxonomic scope" value="Eukaryota"/>
</dbReference>
<dbReference type="GeneTree" id="ENSGT01030000234613"/>
<dbReference type="HOGENOM" id="CLU_011776_2_0_1"/>
<dbReference type="InParanoid" id="P32844"/>
<dbReference type="OMA" id="MNIGPKT"/>
<dbReference type="OrthoDB" id="190098at2759"/>
<dbReference type="BioCyc" id="YEAST:G3O-31335-MONOMER"/>
<dbReference type="BioGRID-ORCS" id="854742">
    <property type="hits" value="2 hits in 10 CRISPR screens"/>
</dbReference>
<dbReference type="EvolutionaryTrace" id="P32844"/>
<dbReference type="PRO" id="PR:P32844"/>
<dbReference type="Proteomes" id="UP000002311">
    <property type="component" value="Chromosome IX"/>
</dbReference>
<dbReference type="RNAct" id="P32844">
    <property type="molecule type" value="protein"/>
</dbReference>
<dbReference type="GO" id="GO:0005935">
    <property type="term" value="C:cellular bud neck"/>
    <property type="evidence" value="ECO:0000314"/>
    <property type="project" value="SGD"/>
</dbReference>
<dbReference type="GO" id="GO:0005934">
    <property type="term" value="C:cellular bud tip"/>
    <property type="evidence" value="ECO:0000314"/>
    <property type="project" value="SGD"/>
</dbReference>
<dbReference type="GO" id="GO:0000145">
    <property type="term" value="C:exocyst"/>
    <property type="evidence" value="ECO:0000314"/>
    <property type="project" value="SGD"/>
</dbReference>
<dbReference type="GO" id="GO:0043332">
    <property type="term" value="C:mating projection tip"/>
    <property type="evidence" value="ECO:0007005"/>
    <property type="project" value="SGD"/>
</dbReference>
<dbReference type="GO" id="GO:0005628">
    <property type="term" value="C:prospore membrane"/>
    <property type="evidence" value="ECO:0007005"/>
    <property type="project" value="SGD"/>
</dbReference>
<dbReference type="GO" id="GO:0000149">
    <property type="term" value="F:SNARE binding"/>
    <property type="evidence" value="ECO:0000314"/>
    <property type="project" value="SGD"/>
</dbReference>
<dbReference type="GO" id="GO:0051601">
    <property type="term" value="P:exocyst localization"/>
    <property type="evidence" value="ECO:0000315"/>
    <property type="project" value="SGD"/>
</dbReference>
<dbReference type="GO" id="GO:0006887">
    <property type="term" value="P:exocytosis"/>
    <property type="evidence" value="ECO:0000315"/>
    <property type="project" value="SGD"/>
</dbReference>
<dbReference type="GO" id="GO:0006893">
    <property type="term" value="P:Golgi to plasma membrane transport"/>
    <property type="evidence" value="ECO:0000315"/>
    <property type="project" value="SGD"/>
</dbReference>
<dbReference type="GO" id="GO:0035544">
    <property type="term" value="P:negative regulation of SNARE complex assembly"/>
    <property type="evidence" value="ECO:0000314"/>
    <property type="project" value="SGD"/>
</dbReference>
<dbReference type="GO" id="GO:0015031">
    <property type="term" value="P:protein transport"/>
    <property type="evidence" value="ECO:0007669"/>
    <property type="project" value="UniProtKB-KW"/>
</dbReference>
<dbReference type="GO" id="GO:0006904">
    <property type="term" value="P:vesicle docking involved in exocytosis"/>
    <property type="evidence" value="ECO:0000303"/>
    <property type="project" value="ComplexPortal"/>
</dbReference>
<dbReference type="FunFam" id="1.10.357.70:FF:000008">
    <property type="entry name" value="Exocyst complex component"/>
    <property type="match status" value="1"/>
</dbReference>
<dbReference type="FunFam" id="1.10.357.50:FF:000006">
    <property type="entry name" value="Exocyst complex component sec6"/>
    <property type="match status" value="1"/>
</dbReference>
<dbReference type="Gene3D" id="1.10.357.50">
    <property type="match status" value="1"/>
</dbReference>
<dbReference type="Gene3D" id="1.10.357.70">
    <property type="entry name" value="Exocyst complex component Sec6, C-terminal domain"/>
    <property type="match status" value="1"/>
</dbReference>
<dbReference type="InterPro" id="IPR010326">
    <property type="entry name" value="EXOC3/Sec6"/>
</dbReference>
<dbReference type="InterPro" id="IPR042532">
    <property type="entry name" value="EXOC3/Sec6_C"/>
</dbReference>
<dbReference type="PANTHER" id="PTHR21292:SF1">
    <property type="entry name" value="EXOCYST COMPLEX COMPONENT 3"/>
    <property type="match status" value="1"/>
</dbReference>
<dbReference type="PANTHER" id="PTHR21292">
    <property type="entry name" value="EXOCYST COMPLEX COMPONENT SEC6-RELATED"/>
    <property type="match status" value="1"/>
</dbReference>
<dbReference type="Pfam" id="PF06046">
    <property type="entry name" value="Sec6"/>
    <property type="match status" value="1"/>
</dbReference>
<comment type="function">
    <text>Component of the exocyst complex involved in the docking of exocytic vesicles with fusion sites on the plasma membrane.</text>
</comment>
<comment type="subunit">
    <text>The exocyst complex is composed of SEC3, SEC5, SEC6, SEC8, SEC10, SEC15, EXO70 and EXO84.</text>
</comment>
<comment type="interaction">
    <interactant intactId="EBI-16874">
        <id>P32844</id>
    </interactant>
    <interactant intactId="EBI-6717">
        <id>P19658</id>
        <label>EXO70</label>
    </interactant>
    <organismsDiffer>false</organismsDiffer>
    <experiments>4</experiments>
</comment>
<comment type="interaction">
    <interactant intactId="EBI-16874">
        <id>P32844</id>
    </interactant>
    <interactant intactId="EBI-16504">
        <id>Q06245</id>
        <label>SEC10</label>
    </interactant>
    <organismsDiffer>false</organismsDiffer>
    <experiments>3</experiments>
</comment>
<comment type="interaction">
    <interactant intactId="EBI-16874">
        <id>P32844</id>
    </interactant>
    <interactant intactId="EBI-16865">
        <id>P89102</id>
        <label>SEC5</label>
    </interactant>
    <organismsDiffer>false</organismsDiffer>
    <experiments>4</experiments>
</comment>
<comment type="interaction">
    <interactant intactId="EBI-16874">
        <id>P32844</id>
    </interactant>
    <interactant intactId="EBI-16896">
        <id>P32855</id>
        <label>SEC8</label>
    </interactant>
    <organismsDiffer>false</organismsDiffer>
    <experiments>4</experiments>
</comment>
<comment type="subcellular location">
    <subcellularLocation>
        <location>Cytoplasm</location>
    </subcellularLocation>
</comment>
<comment type="miscellaneous">
    <text evidence="1">Present with 1080 molecules/cell in log phase SD medium.</text>
</comment>
<comment type="similarity">
    <text evidence="2">Belongs to the SEC6 family.</text>
</comment>
<reference key="1">
    <citation type="journal article" date="1992" name="Yeast">
        <title>SEC6 encodes an 85 kDa soluble protein required for exocytosis in yeast.</title>
        <authorList>
            <person name="Potenza M."/>
            <person name="Bowser R."/>
            <person name="Mueller H."/>
            <person name="Novick P."/>
        </authorList>
    </citation>
    <scope>NUCLEOTIDE SEQUENCE [GENOMIC DNA]</scope>
</reference>
<reference key="2">
    <citation type="journal article" date="1997" name="Nature">
        <title>The nucleotide sequence of Saccharomyces cerevisiae chromosome IX.</title>
        <authorList>
            <person name="Churcher C.M."/>
            <person name="Bowman S."/>
            <person name="Badcock K."/>
            <person name="Bankier A.T."/>
            <person name="Brown D."/>
            <person name="Chillingworth T."/>
            <person name="Connor R."/>
            <person name="Devlin K."/>
            <person name="Gentles S."/>
            <person name="Hamlin N."/>
            <person name="Harris D.E."/>
            <person name="Horsnell T."/>
            <person name="Hunt S."/>
            <person name="Jagels K."/>
            <person name="Jones M."/>
            <person name="Lye G."/>
            <person name="Moule S."/>
            <person name="Odell C."/>
            <person name="Pearson D."/>
            <person name="Rajandream M.A."/>
            <person name="Rice P."/>
            <person name="Rowley N."/>
            <person name="Skelton J."/>
            <person name="Smith V."/>
            <person name="Walsh S.V."/>
            <person name="Whitehead S."/>
            <person name="Barrell B.G."/>
        </authorList>
    </citation>
    <scope>NUCLEOTIDE SEQUENCE [LARGE SCALE GENOMIC DNA]</scope>
    <source>
        <strain>ATCC 204508 / S288c</strain>
    </source>
</reference>
<reference key="3">
    <citation type="journal article" date="2014" name="G3 (Bethesda)">
        <title>The reference genome sequence of Saccharomyces cerevisiae: Then and now.</title>
        <authorList>
            <person name="Engel S.R."/>
            <person name="Dietrich F.S."/>
            <person name="Fisk D.G."/>
            <person name="Binkley G."/>
            <person name="Balakrishnan R."/>
            <person name="Costanzo M.C."/>
            <person name="Dwight S.S."/>
            <person name="Hitz B.C."/>
            <person name="Karra K."/>
            <person name="Nash R.S."/>
            <person name="Weng S."/>
            <person name="Wong E.D."/>
            <person name="Lloyd P."/>
            <person name="Skrzypek M.S."/>
            <person name="Miyasato S.R."/>
            <person name="Simison M."/>
            <person name="Cherry J.M."/>
        </authorList>
    </citation>
    <scope>GENOME REANNOTATION</scope>
    <source>
        <strain>ATCC 204508 / S288c</strain>
    </source>
</reference>
<reference key="4">
    <citation type="journal article" date="2003" name="Nature">
        <title>Global analysis of protein expression in yeast.</title>
        <authorList>
            <person name="Ghaemmaghami S."/>
            <person name="Huh W.-K."/>
            <person name="Bower K."/>
            <person name="Howson R.W."/>
            <person name="Belle A."/>
            <person name="Dephoure N."/>
            <person name="O'Shea E.K."/>
            <person name="Weissman J.S."/>
        </authorList>
    </citation>
    <scope>LEVEL OF PROTEIN EXPRESSION [LARGE SCALE ANALYSIS]</scope>
</reference>
<reference key="5">
    <citation type="journal article" date="2012" name="Proc. Natl. Acad. Sci. U.S.A.">
        <title>N-terminal acetylome analyses and functional insights of the N-terminal acetyltransferase NatB.</title>
        <authorList>
            <person name="Van Damme P."/>
            <person name="Lasa M."/>
            <person name="Polevoda B."/>
            <person name="Gazquez C."/>
            <person name="Elosegui-Artola A."/>
            <person name="Kim D.S."/>
            <person name="De Juan-Pardo E."/>
            <person name="Demeyer K."/>
            <person name="Hole K."/>
            <person name="Larrea E."/>
            <person name="Timmerman E."/>
            <person name="Prieto J."/>
            <person name="Arnesen T."/>
            <person name="Sherman F."/>
            <person name="Gevaert K."/>
            <person name="Aldabe R."/>
        </authorList>
    </citation>
    <scope>ACETYLATION [LARGE SCALE ANALYSIS] AT SER-2</scope>
    <scope>CLEAVAGE OF INITIATOR METHIONINE [LARGE SCALE ANALYSIS]</scope>
    <scope>IDENTIFICATION BY MASS SPECTROMETRY [LARGE SCALE ANALYSIS]</scope>
</reference>
<reference key="6">
    <citation type="journal article" date="2006" name="Nat. Struct. Mol. Biol.">
        <title>The structure of the exocyst subunit Sec6p defines a conserved architecture with diverse roles.</title>
        <authorList>
            <person name="Sivaram M.V."/>
            <person name="Furgason M.L."/>
            <person name="Brewer D.N."/>
            <person name="Munson M."/>
        </authorList>
    </citation>
    <scope>X-RAY CRYSTALLOGRAPHY (2.4 ANGSTROMS) OF 411-805</scope>
</reference>
<gene>
    <name type="primary">SEC6</name>
    <name type="ordered locus">YIL068C</name>
</gene>
<keyword id="KW-0002">3D-structure</keyword>
<keyword id="KW-0007">Acetylation</keyword>
<keyword id="KW-0963">Cytoplasm</keyword>
<keyword id="KW-0268">Exocytosis</keyword>
<keyword id="KW-0653">Protein transport</keyword>
<keyword id="KW-1185">Reference proteome</keyword>
<keyword id="KW-0813">Transport</keyword>
<name>SEC6_YEAST</name>
<proteinExistence type="evidence at protein level"/>
<protein>
    <recommendedName>
        <fullName>Exocyst complex component SEC6</fullName>
    </recommendedName>
</protein>
<organism>
    <name type="scientific">Saccharomyces cerevisiae (strain ATCC 204508 / S288c)</name>
    <name type="common">Baker's yeast</name>
    <dbReference type="NCBI Taxonomy" id="559292"/>
    <lineage>
        <taxon>Eukaryota</taxon>
        <taxon>Fungi</taxon>
        <taxon>Dikarya</taxon>
        <taxon>Ascomycota</taxon>
        <taxon>Saccharomycotina</taxon>
        <taxon>Saccharomycetes</taxon>
        <taxon>Saccharomycetales</taxon>
        <taxon>Saccharomycetaceae</taxon>
        <taxon>Saccharomyces</taxon>
    </lineage>
</organism>
<sequence length="805" mass="93428">MSSDPLQQVCDLIKGDLSLERVRDIKEQLLKEKSVVEYQLNKESDKYYGEVEESLKLLNLSKNSVTSIKQQINEVNKLGNDNRFAINRYDILFRATKLYETVNTTSSIYDRIYNFVALMEHIERLLVAELAEDALETGCPHLLEIHFLLTSARDFQEQVVVMAKEATEDAQRTVMKLFSRLSGIISKFDKLLDGLTYDIVEMARAEQISLAIRLFKIYDLEEREDLRIEAIRNIIKKKEIEIEKSSIKKLPNSKNTARLQDETPKVIEYPTNKGLYQEIMSGTISTRTAPRGYKHFLINGINNSISEMFGEMREKYVGDQKFDVLDNMDWIFNELIIVKEHIANCCPPHWNIFEVYFDQYYKELHSLITDLVESEPETIIILDILAFDKTFQDTLKQDFGFTKSEVKSVIGDKEKETLFKDYLNLIVVKMTEWIGNLEKAEFDVFLERSTPPHSDSDGLLFLDGTKTCFQMFTQQVEVAAGTNQAKILVGVVERFSDLLTKRQKNWISKISEEIKKQINYNHKYDIDPESITPEDECPGGLVEYLIAVSNDQMKAADYAVAISSKYGKLVSKVYEKQITNHLEGTLDGFAEVAQCSSLGLITLMFDDLRKPYQEIFSKTWYMGSQAQQIADTLDEYLLDIKPQMNSVLFVNFIDNVIGETIIKFLTALSFEHSFKNKNNKFLEAMKRDFEIFYQLFVKVLDGNESKDTLITQNFTVMEFFMDLSCEPIDSILDIWQKYLEVYWDSRIDLLVGILKCRKDVSSSERKKIVQQATEMLHEYRRNMEANGVDREPTLMRRFVLEFEKQ</sequence>